<protein>
    <recommendedName>
        <fullName>Probable kinetochore protein NUF2</fullName>
    </recommendedName>
</protein>
<sequence length="451" mass="52887">MSKDVFPLLELSELVTCLQSCDFSLAVEENISKPSSQYVITLYKQIIDTFMGVSPDTLLSNEALFDNSGSNDIQQNPAYTETVKVLALNKICFKFFQDIGVSDFNMMDLYKPDSLRTRRLLSAVVNYARFREERMFDCDKFMSKTEFLLNQLRSKFDDYNYLQQQINKHRNEIELREGETFETLQQQNKHLDQQISRLKGLQETLNIDYNAYKSRKQSLLHDLEKFGFELIELEFERNKLEKHSKTDFNELNLNIEKLSTLLATQQTNLNNLEQKHRKLRISMNTFQTLTHELYDVLQLISTDLQESHLREANLIDMREQLLQTDQKLNNILSSGVMVKMKILQSQLDNQKKKLHQLEGETKAKQIENSETLQLLQRQYTDEVVPDLRAAEEQVENDLANGTIKNYDYEISQLKQAFQTEIDAIDLEYSLLSSHINRYMEEMLRVMVEVTS</sequence>
<evidence type="ECO:0000250" key="1"/>
<evidence type="ECO:0000255" key="2"/>
<evidence type="ECO:0000305" key="3"/>
<reference key="1">
    <citation type="journal article" date="2004" name="Nature">
        <title>Genome evolution in yeasts.</title>
        <authorList>
            <person name="Dujon B."/>
            <person name="Sherman D."/>
            <person name="Fischer G."/>
            <person name="Durrens P."/>
            <person name="Casaregola S."/>
            <person name="Lafontaine I."/>
            <person name="de Montigny J."/>
            <person name="Marck C."/>
            <person name="Neuveglise C."/>
            <person name="Talla E."/>
            <person name="Goffard N."/>
            <person name="Frangeul L."/>
            <person name="Aigle M."/>
            <person name="Anthouard V."/>
            <person name="Babour A."/>
            <person name="Barbe V."/>
            <person name="Barnay S."/>
            <person name="Blanchin S."/>
            <person name="Beckerich J.-M."/>
            <person name="Beyne E."/>
            <person name="Bleykasten C."/>
            <person name="Boisrame A."/>
            <person name="Boyer J."/>
            <person name="Cattolico L."/>
            <person name="Confanioleri F."/>
            <person name="de Daruvar A."/>
            <person name="Despons L."/>
            <person name="Fabre E."/>
            <person name="Fairhead C."/>
            <person name="Ferry-Dumazet H."/>
            <person name="Groppi A."/>
            <person name="Hantraye F."/>
            <person name="Hennequin C."/>
            <person name="Jauniaux N."/>
            <person name="Joyet P."/>
            <person name="Kachouri R."/>
            <person name="Kerrest A."/>
            <person name="Koszul R."/>
            <person name="Lemaire M."/>
            <person name="Lesur I."/>
            <person name="Ma L."/>
            <person name="Muller H."/>
            <person name="Nicaud J.-M."/>
            <person name="Nikolski M."/>
            <person name="Oztas S."/>
            <person name="Ozier-Kalogeropoulos O."/>
            <person name="Pellenz S."/>
            <person name="Potier S."/>
            <person name="Richard G.-F."/>
            <person name="Straub M.-L."/>
            <person name="Suleau A."/>
            <person name="Swennen D."/>
            <person name="Tekaia F."/>
            <person name="Wesolowski-Louvel M."/>
            <person name="Westhof E."/>
            <person name="Wirth B."/>
            <person name="Zeniou-Meyer M."/>
            <person name="Zivanovic Y."/>
            <person name="Bolotin-Fukuhara M."/>
            <person name="Thierry A."/>
            <person name="Bouchier C."/>
            <person name="Caudron B."/>
            <person name="Scarpelli C."/>
            <person name="Gaillardin C."/>
            <person name="Weissenbach J."/>
            <person name="Wincker P."/>
            <person name="Souciet J.-L."/>
        </authorList>
    </citation>
    <scope>NUCLEOTIDE SEQUENCE [LARGE SCALE GENOMIC DNA]</scope>
    <source>
        <strain>ATCC 8585 / CBS 2359 / DSM 70799 / NBRC 1267 / NRRL Y-1140 / WM37</strain>
    </source>
</reference>
<organism>
    <name type="scientific">Kluyveromyces lactis (strain ATCC 8585 / CBS 2359 / DSM 70799 / NBRC 1267 / NRRL Y-1140 / WM37)</name>
    <name type="common">Yeast</name>
    <name type="synonym">Candida sphaerica</name>
    <dbReference type="NCBI Taxonomy" id="284590"/>
    <lineage>
        <taxon>Eukaryota</taxon>
        <taxon>Fungi</taxon>
        <taxon>Dikarya</taxon>
        <taxon>Ascomycota</taxon>
        <taxon>Saccharomycotina</taxon>
        <taxon>Saccharomycetes</taxon>
        <taxon>Saccharomycetales</taxon>
        <taxon>Saccharomycetaceae</taxon>
        <taxon>Kluyveromyces</taxon>
    </lineage>
</organism>
<keyword id="KW-0131">Cell cycle</keyword>
<keyword id="KW-0132">Cell division</keyword>
<keyword id="KW-0137">Centromere</keyword>
<keyword id="KW-0158">Chromosome</keyword>
<keyword id="KW-0175">Coiled coil</keyword>
<keyword id="KW-0995">Kinetochore</keyword>
<keyword id="KW-0498">Mitosis</keyword>
<keyword id="KW-0539">Nucleus</keyword>
<keyword id="KW-1185">Reference proteome</keyword>
<dbReference type="EMBL" id="CR382126">
    <property type="protein sequence ID" value="CAG98791.1"/>
    <property type="molecule type" value="Genomic_DNA"/>
</dbReference>
<dbReference type="RefSeq" id="XP_456083.1">
    <property type="nucleotide sequence ID" value="XM_456083.1"/>
</dbReference>
<dbReference type="SMR" id="Q6CJ06"/>
<dbReference type="FunCoup" id="Q6CJ06">
    <property type="interactions" value="358"/>
</dbReference>
<dbReference type="STRING" id="284590.Q6CJ06"/>
<dbReference type="PaxDb" id="284590-Q6CJ06"/>
<dbReference type="KEGG" id="kla:KLLA0_F22451g"/>
<dbReference type="eggNOG" id="KOG4438">
    <property type="taxonomic scope" value="Eukaryota"/>
</dbReference>
<dbReference type="HOGENOM" id="CLU_025461_2_0_1"/>
<dbReference type="InParanoid" id="Q6CJ06"/>
<dbReference type="OMA" id="YLKMEAH"/>
<dbReference type="Proteomes" id="UP000000598">
    <property type="component" value="Chromosome F"/>
</dbReference>
<dbReference type="GO" id="GO:0031262">
    <property type="term" value="C:Ndc80 complex"/>
    <property type="evidence" value="ECO:0000250"/>
    <property type="project" value="UniProtKB"/>
</dbReference>
<dbReference type="GO" id="GO:0005634">
    <property type="term" value="C:nucleus"/>
    <property type="evidence" value="ECO:0007669"/>
    <property type="project" value="UniProtKB-SubCell"/>
</dbReference>
<dbReference type="GO" id="GO:0008017">
    <property type="term" value="F:microtubule binding"/>
    <property type="evidence" value="ECO:0000250"/>
    <property type="project" value="UniProtKB"/>
</dbReference>
<dbReference type="GO" id="GO:0051301">
    <property type="term" value="P:cell division"/>
    <property type="evidence" value="ECO:0007669"/>
    <property type="project" value="UniProtKB-KW"/>
</dbReference>
<dbReference type="Gene3D" id="1.10.418.60">
    <property type="entry name" value="Ncd80 complex, Nuf2 subunit"/>
    <property type="match status" value="1"/>
</dbReference>
<dbReference type="InterPro" id="IPR005549">
    <property type="entry name" value="Kinetochore_Nuf2_N"/>
</dbReference>
<dbReference type="InterPro" id="IPR038275">
    <property type="entry name" value="Nuf2_N_sf"/>
</dbReference>
<dbReference type="Pfam" id="PF03800">
    <property type="entry name" value="Nuf2"/>
    <property type="match status" value="1"/>
</dbReference>
<gene>
    <name type="primary">NUF2</name>
    <name type="ordered locus">KLLA0F22451g</name>
</gene>
<accession>Q6CJ06</accession>
<comment type="function">
    <text evidence="1">Acts as a component of the essential kinetochore-associated NDC80 complex, which is required for chromosome segregation and spindle checkpoint activity.</text>
</comment>
<comment type="subunit">
    <text evidence="1">Component of the NDC80 complex, which consists of NDC80, NUF2, SPC24 and SPC25.</text>
</comment>
<comment type="subcellular location">
    <subcellularLocation>
        <location evidence="1">Nucleus</location>
    </subcellularLocation>
    <subcellularLocation>
        <location evidence="1">Chromosome</location>
        <location evidence="1">Centromere</location>
        <location evidence="1">Kinetochore</location>
    </subcellularLocation>
    <text evidence="1">Associated with kinetochores.</text>
</comment>
<comment type="similarity">
    <text evidence="3">Belongs to the NUF2 family.</text>
</comment>
<name>NUF2_KLULA</name>
<proteinExistence type="inferred from homology"/>
<feature type="chain" id="PRO_0000246654" description="Probable kinetochore protein NUF2">
    <location>
        <begin position="1"/>
        <end position="451"/>
    </location>
</feature>
<feature type="coiled-coil region" evidence="2">
    <location>
        <begin position="157"/>
        <end position="368"/>
    </location>
</feature>